<sequence length="389" mass="42567">MAIAAIMGDVLMLMGFNKAAFGKLNSASRAALIGAVIWAVLSIVYLTIFNGWKNLFTMLPHEFFIVLLSIALPIGLTVLILMLSRIVKSVDTLKSEVTTLSRNDVSSEGSVAMLADLFREHRAAIAAQVEAQVEATTQLIRLNQEGRALAAPAQASGTDEAMTLLAQLFREHREAVAAQLEAQASATAQLVQVTRDSRDGIVDELRSQRVLSQEITQELSQITQSRTVAPAPPGLDPSQRIDRMRALAEVLGLALNDLSMTATQVLTEHLNAAHGDRDGTRKFISTLTTAYFAGDKNVFFRSLVQEAVNRSEQLRRCAEDTESVRQQISKILREAREIRSLVAACDPNDLVRIVFEDGELWALEKALAEHFLIDGSPVWTETAPDSGMD</sequence>
<name>MAMY_PARM1</name>
<protein>
    <recommendedName>
        <fullName evidence="6">Liposome tubulation protein MamY</fullName>
    </recommendedName>
</protein>
<dbReference type="EMBL" id="AP007255">
    <property type="protein sequence ID" value="BAE49822.1"/>
    <property type="molecule type" value="Genomic_DNA"/>
</dbReference>
<dbReference type="STRING" id="342108.amb1018"/>
<dbReference type="KEGG" id="mag:amb1018"/>
<dbReference type="HOGENOM" id="CLU_882247_0_0_5"/>
<dbReference type="Proteomes" id="UP000007058">
    <property type="component" value="Chromosome"/>
</dbReference>
<dbReference type="GO" id="GO:0110146">
    <property type="term" value="C:magnetosome membrane"/>
    <property type="evidence" value="ECO:0000314"/>
    <property type="project" value="UniProtKB"/>
</dbReference>
<dbReference type="GO" id="GO:0008289">
    <property type="term" value="F:lipid binding"/>
    <property type="evidence" value="ECO:0007669"/>
    <property type="project" value="UniProtKB-KW"/>
</dbReference>
<dbReference type="NCBIfam" id="NF040997">
    <property type="entry name" value="MamY"/>
    <property type="match status" value="1"/>
</dbReference>
<reference key="1">
    <citation type="journal article" date="2005" name="DNA Res.">
        <title>Complete genome sequence of the facultative anaerobic magnetotactic bacterium Magnetospirillum sp. strain AMB-1.</title>
        <authorList>
            <person name="Matsunaga T."/>
            <person name="Okamura Y."/>
            <person name="Fukuda Y."/>
            <person name="Wahyudi A.T."/>
            <person name="Murase Y."/>
            <person name="Takeyama H."/>
        </authorList>
    </citation>
    <scope>NUCLEOTIDE SEQUENCE [LARGE SCALE GENOMIC DNA]</scope>
    <source>
        <strain>ATCC 700264 / AMB-1</strain>
    </source>
</reference>
<reference key="2">
    <citation type="journal article" date="2010" name="Mol. Microbiol.">
        <title>Identification and functional characterization of liposome tubulation protein from magnetotactic bacteria.</title>
        <authorList>
            <person name="Tanaka M."/>
            <person name="Arakaki A."/>
            <person name="Matsunaga T."/>
        </authorList>
    </citation>
    <scope>FUNCTION</scope>
    <scope>SUBCELLULAR LOCATION</scope>
    <scope>DISRUPTION PHENOTYPE</scope>
    <scope>LIPOSOME-BINDING</scope>
    <source>
        <strain>ATCC 700264 / AMB-1</strain>
    </source>
</reference>
<reference key="3">
    <citation type="journal article" date="2016" name="J. Bacteriol.">
        <title>Comparative subcellular localization analysis of magnetosome proteins reveals a unique localization behavior of Mms6 protein onto magnetite crystals.</title>
        <authorList>
            <person name="Arakaki A."/>
            <person name="Kikuchi D."/>
            <person name="Tanaka M."/>
            <person name="Yamagishi A."/>
            <person name="Yoda T."/>
            <person name="Matsunaga T."/>
        </authorList>
    </citation>
    <scope>SUBCELLULAR LOCATION</scope>
    <source>
        <strain>ATCC 700264 / AMB-1</strain>
    </source>
</reference>
<reference key="4">
    <citation type="journal article" date="2018" name="Biotechnol. J.">
        <title>Enhanced Tubulation of Liposome Containing Cardiolipin by MamY Protein from Magnetotactic Bacteria.</title>
        <authorList>
            <person name="Tanaka M."/>
            <person name="Suwatthanarak T."/>
            <person name="Arakaki A."/>
            <person name="Johnson B.R.G."/>
            <person name="Evans S.D."/>
            <person name="Okochi M."/>
            <person name="Staniland S.S."/>
            <person name="Matsunaga T."/>
        </authorList>
    </citation>
    <scope>FUNCTION</scope>
    <scope>BINDS CARDIOLIPIN</scope>
    <source>
        <strain>ATCC 700264 / AMB-1</strain>
    </source>
</reference>
<comment type="function">
    <text evidence="1 3 5">Causes tubulation when added to magnetosome-derived liposomes, binds liposomes; may be involved in constriction of the cell inner membrane to form mature magnetosomes (PubMed:20345667). Binds preferentially to cardiolipin, a component of bacterial membranes, with very poor to no binding of other tested (phospho)lipids. Addition of cardiolipin to magnetosome-derived lipids increases tubulation (PubMed:30039923). May function with MamX, MamZ amd Mms6 (By similarity).</text>
</comment>
<comment type="subcellular location">
    <subcellularLocation>
        <location evidence="3">Magnetosome membrane</location>
        <topology evidence="2">Multi-pass membrane protein</topology>
    </subcellularLocation>
    <text evidence="3 4">Primarily associated with immature magnetosomes with small magnetite crystals, but longer than the usual magnetosome chain.</text>
</comment>
<comment type="disruption phenotype">
    <text evidence="3">No growth phenotype, retains a magnetic response. Magnetosome vesicles are slightly bigger than wild-type while magnetite crystals are equal in number but have a much wider size range.</text>
</comment>
<comment type="miscellaneous">
    <text evidence="7">This bacteria makes up to 20 cubo-octahedral magnetosomes of about 45 nm in diameter which contain membrane-bound crystals of magnetite (Fe(3)O(4)).</text>
</comment>
<comment type="similarity">
    <text evidence="7">Belongs to the magnetosome MamY family.</text>
</comment>
<feature type="chain" id="PRO_0000447813" description="Liposome tubulation protein MamY">
    <location>
        <begin position="1"/>
        <end position="389"/>
    </location>
</feature>
<feature type="topological domain" description="Cytoplasmic" evidence="7">
    <location>
        <begin position="1"/>
        <end position="31"/>
    </location>
</feature>
<feature type="transmembrane region" description="Helical" evidence="2">
    <location>
        <begin position="32"/>
        <end position="52"/>
    </location>
</feature>
<feature type="topological domain" description="Lumenal" evidence="7">
    <location>
        <begin position="53"/>
        <end position="62"/>
    </location>
</feature>
<feature type="transmembrane region" description="Helical" evidence="2">
    <location>
        <begin position="63"/>
        <end position="83"/>
    </location>
</feature>
<feature type="topological domain" description="Cytoplasmic" evidence="7">
    <location>
        <begin position="84"/>
        <end position="389"/>
    </location>
</feature>
<proteinExistence type="evidence at protein level"/>
<keyword id="KW-0091">Biomineralization</keyword>
<keyword id="KW-0446">Lipid-binding</keyword>
<keyword id="KW-1281">Magnetosome</keyword>
<keyword id="KW-0472">Membrane</keyword>
<keyword id="KW-0812">Transmembrane</keyword>
<keyword id="KW-1133">Transmembrane helix</keyword>
<gene>
    <name evidence="6" type="primary">mamY</name>
    <name type="ordered locus">amb1018</name>
</gene>
<organism>
    <name type="scientific">Paramagnetospirillum magneticum (strain ATCC 700264 / AMB-1)</name>
    <name type="common">Magnetospirillum magneticum</name>
    <dbReference type="NCBI Taxonomy" id="342108"/>
    <lineage>
        <taxon>Bacteria</taxon>
        <taxon>Pseudomonadati</taxon>
        <taxon>Pseudomonadota</taxon>
        <taxon>Alphaproteobacteria</taxon>
        <taxon>Rhodospirillales</taxon>
        <taxon>Magnetospirillaceae</taxon>
        <taxon>Paramagnetospirillum</taxon>
    </lineage>
</organism>
<accession>Q2W8K3</accession>
<evidence type="ECO:0000250" key="1">
    <source>
        <dbReference type="UniProtKB" id="V6F5F3"/>
    </source>
</evidence>
<evidence type="ECO:0000255" key="2"/>
<evidence type="ECO:0000269" key="3">
    <source>
    </source>
</evidence>
<evidence type="ECO:0000269" key="4">
    <source>
    </source>
</evidence>
<evidence type="ECO:0000269" key="5">
    <source>
    </source>
</evidence>
<evidence type="ECO:0000303" key="6">
    <source>
    </source>
</evidence>
<evidence type="ECO:0000305" key="7"/>